<keyword id="KW-0067">ATP-binding</keyword>
<keyword id="KW-0547">Nucleotide-binding</keyword>
<keyword id="KW-1185">Reference proteome</keyword>
<name>Y1395_HAEIN</name>
<gene>
    <name type="ordered locus">HI_1395</name>
</gene>
<sequence length="140" mass="15866">MVRKKLWVMQNKAIFYCGTNGSGKSTLRSFNQDAVQIVIDSDHIAMQINPQNPRLADIDAGRKAIGLFHFAIKQHIGFPMESTLSGNSIIQRMKTAKENGFYVHLNYIGINRVEINLARIKARVKSGGHFIAEDIVKYRY</sequence>
<proteinExistence type="predicted"/>
<reference key="1">
    <citation type="journal article" date="1995" name="Science">
        <title>Whole-genome random sequencing and assembly of Haemophilus influenzae Rd.</title>
        <authorList>
            <person name="Fleischmann R.D."/>
            <person name="Adams M.D."/>
            <person name="White O."/>
            <person name="Clayton R.A."/>
            <person name="Kirkness E.F."/>
            <person name="Kerlavage A.R."/>
            <person name="Bult C.J."/>
            <person name="Tomb J.-F."/>
            <person name="Dougherty B.A."/>
            <person name="Merrick J.M."/>
            <person name="McKenney K."/>
            <person name="Sutton G.G."/>
            <person name="FitzHugh W."/>
            <person name="Fields C.A."/>
            <person name="Gocayne J.D."/>
            <person name="Scott J.D."/>
            <person name="Shirley R."/>
            <person name="Liu L.-I."/>
            <person name="Glodek A."/>
            <person name="Kelley J.M."/>
            <person name="Weidman J.F."/>
            <person name="Phillips C.A."/>
            <person name="Spriggs T."/>
            <person name="Hedblom E."/>
            <person name="Cotton M.D."/>
            <person name="Utterback T.R."/>
            <person name="Hanna M.C."/>
            <person name="Nguyen D.T."/>
            <person name="Saudek D.M."/>
            <person name="Brandon R.C."/>
            <person name="Fine L.D."/>
            <person name="Fritchman J.L."/>
            <person name="Fuhrmann J.L."/>
            <person name="Geoghagen N.S.M."/>
            <person name="Gnehm C.L."/>
            <person name="McDonald L.A."/>
            <person name="Small K.V."/>
            <person name="Fraser C.M."/>
            <person name="Smith H.O."/>
            <person name="Venter J.C."/>
        </authorList>
    </citation>
    <scope>NUCLEOTIDE SEQUENCE [LARGE SCALE GENOMIC DNA]</scope>
    <source>
        <strain>ATCC 51907 / DSM 11121 / KW20 / Rd</strain>
    </source>
</reference>
<feature type="chain" id="PRO_0000078037" description="Uncharacterized protein HI_1395">
    <location>
        <begin position="1"/>
        <end position="140"/>
    </location>
</feature>
<feature type="binding site" evidence="1">
    <location>
        <begin position="18"/>
        <end position="25"/>
    </location>
    <ligand>
        <name>ATP</name>
        <dbReference type="ChEBI" id="CHEBI:30616"/>
    </ligand>
</feature>
<evidence type="ECO:0000250" key="1">
    <source>
        <dbReference type="UniProtKB" id="Q97QZ1"/>
    </source>
</evidence>
<dbReference type="EMBL" id="L42023">
    <property type="protein sequence ID" value="AAC23049.1"/>
    <property type="molecule type" value="Genomic_DNA"/>
</dbReference>
<dbReference type="PIR" id="C64027">
    <property type="entry name" value="C64027"/>
</dbReference>
<dbReference type="STRING" id="71421.HI_1395"/>
<dbReference type="EnsemblBacteria" id="AAC23049">
    <property type="protein sequence ID" value="AAC23049"/>
    <property type="gene ID" value="HI_1395"/>
</dbReference>
<dbReference type="KEGG" id="hin:HI_1395"/>
<dbReference type="eggNOG" id="COG4185">
    <property type="taxonomic scope" value="Bacteria"/>
</dbReference>
<dbReference type="HOGENOM" id="CLU_094497_2_0_6"/>
<dbReference type="Proteomes" id="UP000000579">
    <property type="component" value="Chromosome"/>
</dbReference>
<dbReference type="GO" id="GO:0005524">
    <property type="term" value="F:ATP binding"/>
    <property type="evidence" value="ECO:0007669"/>
    <property type="project" value="UniProtKB-KW"/>
</dbReference>
<dbReference type="GO" id="GO:0016301">
    <property type="term" value="F:kinase activity"/>
    <property type="evidence" value="ECO:0007669"/>
    <property type="project" value="InterPro"/>
</dbReference>
<dbReference type="Gene3D" id="3.40.50.300">
    <property type="entry name" value="P-loop containing nucleotide triphosphate hydrolases"/>
    <property type="match status" value="1"/>
</dbReference>
<dbReference type="InterPro" id="IPR027417">
    <property type="entry name" value="P-loop_NTPase"/>
</dbReference>
<dbReference type="InterPro" id="IPR010488">
    <property type="entry name" value="Zeta_toxin_domain"/>
</dbReference>
<dbReference type="PANTHER" id="PTHR39206">
    <property type="entry name" value="SLL8004 PROTEIN"/>
    <property type="match status" value="1"/>
</dbReference>
<dbReference type="PANTHER" id="PTHR39206:SF1">
    <property type="entry name" value="SLL8004 PROTEIN"/>
    <property type="match status" value="1"/>
</dbReference>
<dbReference type="Pfam" id="PF06414">
    <property type="entry name" value="Zeta_toxin"/>
    <property type="match status" value="1"/>
</dbReference>
<protein>
    <recommendedName>
        <fullName>Uncharacterized protein HI_1395</fullName>
    </recommendedName>
</protein>
<organism>
    <name type="scientific">Haemophilus influenzae (strain ATCC 51907 / DSM 11121 / KW20 / Rd)</name>
    <dbReference type="NCBI Taxonomy" id="71421"/>
    <lineage>
        <taxon>Bacteria</taxon>
        <taxon>Pseudomonadati</taxon>
        <taxon>Pseudomonadota</taxon>
        <taxon>Gammaproteobacteria</taxon>
        <taxon>Pasteurellales</taxon>
        <taxon>Pasteurellaceae</taxon>
        <taxon>Haemophilus</taxon>
    </lineage>
</organism>
<accession>P44173</accession>